<organism>
    <name type="scientific">Methanocaldococcus jannaschii (strain ATCC 43067 / DSM 2661 / JAL-1 / JCM 10045 / NBRC 100440)</name>
    <name type="common">Methanococcus jannaschii</name>
    <dbReference type="NCBI Taxonomy" id="243232"/>
    <lineage>
        <taxon>Archaea</taxon>
        <taxon>Methanobacteriati</taxon>
        <taxon>Methanobacteriota</taxon>
        <taxon>Methanomada group</taxon>
        <taxon>Methanococci</taxon>
        <taxon>Methanococcales</taxon>
        <taxon>Methanocaldococcaceae</taxon>
        <taxon>Methanocaldococcus</taxon>
    </lineage>
</organism>
<feature type="chain" id="PRO_0000158599" description="Manganese-dependent inorganic pyrophosphatase">
    <location>
        <begin position="1"/>
        <end position="307"/>
    </location>
</feature>
<feature type="binding site" evidence="1">
    <location>
        <position position="7"/>
    </location>
    <ligand>
        <name>Mn(2+)</name>
        <dbReference type="ChEBI" id="CHEBI:29035"/>
        <label>1</label>
    </ligand>
</feature>
<feature type="binding site" evidence="1">
    <location>
        <position position="11"/>
    </location>
    <ligand>
        <name>Mn(2+)</name>
        <dbReference type="ChEBI" id="CHEBI:29035"/>
        <label>1</label>
    </ligand>
</feature>
<feature type="binding site" evidence="1">
    <location>
        <position position="13"/>
    </location>
    <ligand>
        <name>Mn(2+)</name>
        <dbReference type="ChEBI" id="CHEBI:29035"/>
        <label>2</label>
    </ligand>
</feature>
<feature type="binding site" evidence="1">
    <location>
        <position position="66"/>
    </location>
    <ligand>
        <name>Mn(2+)</name>
        <dbReference type="ChEBI" id="CHEBI:29035"/>
        <label>1</label>
    </ligand>
</feature>
<feature type="binding site" evidence="1">
    <location>
        <position position="66"/>
    </location>
    <ligand>
        <name>Mn(2+)</name>
        <dbReference type="ChEBI" id="CHEBI:29035"/>
        <label>2</label>
    </ligand>
</feature>
<feature type="binding site" evidence="1">
    <location>
        <position position="88"/>
    </location>
    <ligand>
        <name>Mn(2+)</name>
        <dbReference type="ChEBI" id="CHEBI:29035"/>
        <label>2</label>
    </ligand>
</feature>
<feature type="binding site" evidence="1">
    <location>
        <position position="147"/>
    </location>
    <ligand>
        <name>Mn(2+)</name>
        <dbReference type="ChEBI" id="CHEBI:29035"/>
        <label>2</label>
    </ligand>
</feature>
<feature type="strand" evidence="4">
    <location>
        <begin position="2"/>
        <end position="5"/>
    </location>
</feature>
<feature type="helix" evidence="4">
    <location>
        <begin position="12"/>
        <end position="25"/>
    </location>
</feature>
<feature type="strand" evidence="4">
    <location>
        <begin position="27"/>
        <end position="33"/>
    </location>
</feature>
<feature type="helix" evidence="4">
    <location>
        <begin position="37"/>
        <end position="46"/>
    </location>
</feature>
<feature type="strand" evidence="4">
    <location>
        <begin position="61"/>
        <end position="66"/>
    </location>
</feature>
<feature type="helix" evidence="4">
    <location>
        <begin position="70"/>
        <end position="72"/>
    </location>
</feature>
<feature type="helix" evidence="4">
    <location>
        <begin position="77"/>
        <end position="79"/>
    </location>
</feature>
<feature type="strand" evidence="4">
    <location>
        <begin position="80"/>
        <end position="89"/>
    </location>
</feature>
<feature type="strand" evidence="4">
    <location>
        <begin position="100"/>
        <end position="103"/>
    </location>
</feature>
<feature type="strand" evidence="4">
    <location>
        <begin position="105"/>
        <end position="107"/>
    </location>
</feature>
<feature type="helix" evidence="4">
    <location>
        <begin position="109"/>
        <end position="118"/>
    </location>
</feature>
<feature type="helix" evidence="4">
    <location>
        <begin position="122"/>
        <end position="125"/>
    </location>
</feature>
<feature type="helix" evidence="4">
    <location>
        <begin position="134"/>
        <end position="148"/>
    </location>
</feature>
<feature type="turn" evidence="4">
    <location>
        <begin position="149"/>
        <end position="152"/>
    </location>
</feature>
<feature type="helix" evidence="4">
    <location>
        <begin position="158"/>
        <end position="171"/>
    </location>
</feature>
<feature type="helix" evidence="4">
    <location>
        <begin position="176"/>
        <end position="188"/>
    </location>
</feature>
<feature type="helix" evidence="4">
    <location>
        <begin position="189"/>
        <end position="192"/>
    </location>
</feature>
<feature type="helix" evidence="4">
    <location>
        <begin position="195"/>
        <end position="199"/>
    </location>
</feature>
<feature type="strand" evidence="4">
    <location>
        <begin position="202"/>
        <end position="208"/>
    </location>
</feature>
<feature type="strand" evidence="4">
    <location>
        <begin position="211"/>
        <end position="221"/>
    </location>
</feature>
<feature type="helix" evidence="4">
    <location>
        <begin position="224"/>
        <end position="243"/>
    </location>
</feature>
<feature type="strand" evidence="4">
    <location>
        <begin position="247"/>
        <end position="255"/>
    </location>
</feature>
<feature type="turn" evidence="4">
    <location>
        <begin position="256"/>
        <end position="259"/>
    </location>
</feature>
<feature type="strand" evidence="4">
    <location>
        <begin position="260"/>
        <end position="267"/>
    </location>
</feature>
<feature type="helix" evidence="4">
    <location>
        <begin position="269"/>
        <end position="275"/>
    </location>
</feature>
<feature type="strand" evidence="4">
    <location>
        <begin position="282"/>
        <end position="287"/>
    </location>
</feature>
<feature type="helix" evidence="4">
    <location>
        <begin position="293"/>
        <end position="296"/>
    </location>
</feature>
<feature type="helix" evidence="4">
    <location>
        <begin position="298"/>
        <end position="305"/>
    </location>
</feature>
<keyword id="KW-0002">3D-structure</keyword>
<keyword id="KW-0170">Cobalt</keyword>
<keyword id="KW-0963">Cytoplasm</keyword>
<keyword id="KW-0903">Direct protein sequencing</keyword>
<keyword id="KW-0378">Hydrolase</keyword>
<keyword id="KW-0464">Manganese</keyword>
<keyword id="KW-0479">Metal-binding</keyword>
<keyword id="KW-1185">Reference proteome</keyword>
<comment type="catalytic activity">
    <reaction evidence="2">
        <text>diphosphate + H2O = 2 phosphate + H(+)</text>
        <dbReference type="Rhea" id="RHEA:24576"/>
        <dbReference type="ChEBI" id="CHEBI:15377"/>
        <dbReference type="ChEBI" id="CHEBI:15378"/>
        <dbReference type="ChEBI" id="CHEBI:33019"/>
        <dbReference type="ChEBI" id="CHEBI:43474"/>
        <dbReference type="EC" id="3.6.1.1"/>
    </reaction>
</comment>
<comment type="cofactor">
    <cofactor evidence="1">
        <name>Mn(2+)</name>
        <dbReference type="ChEBI" id="CHEBI:29035"/>
    </cofactor>
    <text evidence="1">Binds 2 manganese ions per subunit.</text>
</comment>
<comment type="subcellular location">
    <subcellularLocation>
        <location>Cytoplasm</location>
    </subcellularLocation>
</comment>
<comment type="mass spectrometry"/>
<comment type="similarity">
    <text evidence="3">Belongs to the PPase class C family.</text>
</comment>
<dbReference type="EC" id="3.6.1.1"/>
<dbReference type="EMBL" id="L77117">
    <property type="protein sequence ID" value="AAB98601.1"/>
    <property type="molecule type" value="Genomic_DNA"/>
</dbReference>
<dbReference type="PIR" id="H64375">
    <property type="entry name" value="H64375"/>
</dbReference>
<dbReference type="RefSeq" id="WP_010870112.1">
    <property type="nucleotide sequence ID" value="NC_000909.1"/>
</dbReference>
<dbReference type="PDB" id="2EB0">
    <property type="method" value="X-ray"/>
    <property type="resolution" value="2.20 A"/>
    <property type="chains" value="A/B=1-307"/>
</dbReference>
<dbReference type="PDBsum" id="2EB0"/>
<dbReference type="SMR" id="Q58025"/>
<dbReference type="FunCoup" id="Q58025">
    <property type="interactions" value="6"/>
</dbReference>
<dbReference type="STRING" id="243232.MJ_0608"/>
<dbReference type="PaxDb" id="243232-MJ_0608"/>
<dbReference type="EnsemblBacteria" id="AAB98601">
    <property type="protein sequence ID" value="AAB98601"/>
    <property type="gene ID" value="MJ_0608"/>
</dbReference>
<dbReference type="GeneID" id="1451473"/>
<dbReference type="KEGG" id="mja:MJ_0608"/>
<dbReference type="eggNOG" id="arCOG01567">
    <property type="taxonomic scope" value="Archaea"/>
</dbReference>
<dbReference type="HOGENOM" id="CLU_025243_0_1_2"/>
<dbReference type="InParanoid" id="Q58025"/>
<dbReference type="OrthoDB" id="114945at2157"/>
<dbReference type="PhylomeDB" id="Q58025"/>
<dbReference type="EvolutionaryTrace" id="Q58025"/>
<dbReference type="Proteomes" id="UP000000805">
    <property type="component" value="Chromosome"/>
</dbReference>
<dbReference type="GO" id="GO:0005737">
    <property type="term" value="C:cytoplasm"/>
    <property type="evidence" value="ECO:0000318"/>
    <property type="project" value="GO_Central"/>
</dbReference>
<dbReference type="GO" id="GO:0004427">
    <property type="term" value="F:inorganic diphosphate phosphatase activity"/>
    <property type="evidence" value="ECO:0007669"/>
    <property type="project" value="UniProtKB-UniRule"/>
</dbReference>
<dbReference type="GO" id="GO:0030145">
    <property type="term" value="F:manganese ion binding"/>
    <property type="evidence" value="ECO:0007669"/>
    <property type="project" value="UniProtKB-UniRule"/>
</dbReference>
<dbReference type="FunFam" id="3.10.310.20:FF:000001">
    <property type="entry name" value="Probable manganese-dependent inorganic pyrophosphatase"/>
    <property type="match status" value="1"/>
</dbReference>
<dbReference type="FunFam" id="3.90.1640.10:FF:000001">
    <property type="entry name" value="Probable manganese-dependent inorganic pyrophosphatase"/>
    <property type="match status" value="1"/>
</dbReference>
<dbReference type="Gene3D" id="3.10.310.20">
    <property type="entry name" value="DHHA2 domain"/>
    <property type="match status" value="1"/>
</dbReference>
<dbReference type="Gene3D" id="3.90.1640.10">
    <property type="entry name" value="inorganic pyrophosphatase (n-terminal core)"/>
    <property type="match status" value="1"/>
</dbReference>
<dbReference type="HAMAP" id="MF_00207">
    <property type="entry name" value="PPase_C"/>
    <property type="match status" value="1"/>
</dbReference>
<dbReference type="InterPro" id="IPR001667">
    <property type="entry name" value="DDH_dom"/>
</dbReference>
<dbReference type="InterPro" id="IPR038763">
    <property type="entry name" value="DHH_sf"/>
</dbReference>
<dbReference type="InterPro" id="IPR004097">
    <property type="entry name" value="DHHA2"/>
</dbReference>
<dbReference type="InterPro" id="IPR038222">
    <property type="entry name" value="DHHA2_dom_sf"/>
</dbReference>
<dbReference type="InterPro" id="IPR022934">
    <property type="entry name" value="Mn-dep_inorganic_PyrPase"/>
</dbReference>
<dbReference type="NCBIfam" id="NF003877">
    <property type="entry name" value="PRK05427.1"/>
    <property type="match status" value="1"/>
</dbReference>
<dbReference type="PANTHER" id="PTHR12112">
    <property type="entry name" value="BNIP - RELATED"/>
    <property type="match status" value="1"/>
</dbReference>
<dbReference type="PANTHER" id="PTHR12112:SF22">
    <property type="entry name" value="MANGANESE-DEPENDENT INORGANIC PYROPHOSPHATASE-RELATED"/>
    <property type="match status" value="1"/>
</dbReference>
<dbReference type="Pfam" id="PF01368">
    <property type="entry name" value="DHH"/>
    <property type="match status" value="1"/>
</dbReference>
<dbReference type="Pfam" id="PF02833">
    <property type="entry name" value="DHHA2"/>
    <property type="match status" value="1"/>
</dbReference>
<dbReference type="SMART" id="SM01131">
    <property type="entry name" value="DHHA2"/>
    <property type="match status" value="1"/>
</dbReference>
<dbReference type="SUPFAM" id="SSF64182">
    <property type="entry name" value="DHH phosphoesterases"/>
    <property type="match status" value="1"/>
</dbReference>
<proteinExistence type="evidence at protein level"/>
<sequence>MRYVVGHKNPDTDSIASAIVLAYFLDCYPARLGDINPETEFVLRKFGVMEPELIESAKGKEIILVDHSEKSQSFDDLEEGKLIAIIDHHKVGLTTTEPILYYAKPVGSTATVIAELYFKDAIDLIGGKKKELKPDLAGLLLSAIISDTVLFKSPTTTDLDKEMAKKLAEIAGISNIEEFGMEILKAKSVVGKLKPEEIINMDFKNFDFNGKKVGIGQVEVIDVSEVESKKEDIYKLLEEKLKNEGYDLIVFLITDIMKEGSEALVVGNKEMFEKAFNVKVEGNSVFLEGVMSRKKQVVPPLERAYNG</sequence>
<accession>Q58025</accession>
<protein>
    <recommendedName>
        <fullName>Manganese-dependent inorganic pyrophosphatase</fullName>
        <ecNumber>3.6.1.1</ecNumber>
    </recommendedName>
    <alternativeName>
        <fullName>Pyrophosphate phospho-hydrolase</fullName>
        <shortName>PPase</shortName>
    </alternativeName>
</protein>
<gene>
    <name type="primary">ppaC</name>
    <name type="ordered locus">MJ0608</name>
</gene>
<name>PPAC_METJA</name>
<evidence type="ECO:0000250" key="1"/>
<evidence type="ECO:0000269" key="2">
    <source>
    </source>
</evidence>
<evidence type="ECO:0000305" key="3"/>
<evidence type="ECO:0007829" key="4">
    <source>
        <dbReference type="PDB" id="2EB0"/>
    </source>
</evidence>
<reference key="1">
    <citation type="journal article" date="1996" name="Science">
        <title>Complete genome sequence of the methanogenic archaeon, Methanococcus jannaschii.</title>
        <authorList>
            <person name="Bult C.J."/>
            <person name="White O."/>
            <person name="Olsen G.J."/>
            <person name="Zhou L."/>
            <person name="Fleischmann R.D."/>
            <person name="Sutton G.G."/>
            <person name="Blake J.A."/>
            <person name="FitzGerald L.M."/>
            <person name="Clayton R.A."/>
            <person name="Gocayne J.D."/>
            <person name="Kerlavage A.R."/>
            <person name="Dougherty B.A."/>
            <person name="Tomb J.-F."/>
            <person name="Adams M.D."/>
            <person name="Reich C.I."/>
            <person name="Overbeek R."/>
            <person name="Kirkness E.F."/>
            <person name="Weinstock K.G."/>
            <person name="Merrick J.M."/>
            <person name="Glodek A."/>
            <person name="Scott J.L."/>
            <person name="Geoghagen N.S.M."/>
            <person name="Weidman J.F."/>
            <person name="Fuhrmann J.L."/>
            <person name="Nguyen D."/>
            <person name="Utterback T.R."/>
            <person name="Kelley J.M."/>
            <person name="Peterson J.D."/>
            <person name="Sadow P.W."/>
            <person name="Hanna M.C."/>
            <person name="Cotton M.D."/>
            <person name="Roberts K.M."/>
            <person name="Hurst M.A."/>
            <person name="Kaine B.P."/>
            <person name="Borodovsky M."/>
            <person name="Klenk H.-P."/>
            <person name="Fraser C.M."/>
            <person name="Smith H.O."/>
            <person name="Woese C.R."/>
            <person name="Venter J.C."/>
        </authorList>
    </citation>
    <scope>NUCLEOTIDE SEQUENCE [LARGE SCALE GENOMIC DNA]</scope>
    <source>
        <strain>ATCC 43067 / DSM 2661 / JAL-1 / JCM 10045 / NBRC 100440</strain>
    </source>
</reference>
<reference key="2">
    <citation type="journal article" date="2000" name="Arch. Biochem. Biophys.">
        <title>Methanococcus jannaschii ORF mj0608 codes for a class C inorganic pyrophosphatase protected by Co(2+) or Mn(2+) ions against fluoride inhibition.</title>
        <authorList>
            <person name="Kuhn N.J."/>
            <person name="Wadeson A."/>
            <person name="Ward S."/>
            <person name="Young T.W."/>
        </authorList>
    </citation>
    <scope>PROTEIN SEQUENCE OF 1-5</scope>
    <scope>CATALYTIC ACTIVITY</scope>
    <scope>MASS SPECTROMETRY</scope>
</reference>